<evidence type="ECO:0000255" key="1">
    <source>
        <dbReference type="HAMAP-Rule" id="MF_00185"/>
    </source>
</evidence>
<feature type="chain" id="PRO_0000377082" description="tRNA dimethylallyltransferase 2">
    <location>
        <begin position="1"/>
        <end position="307"/>
    </location>
</feature>
<feature type="region of interest" description="Interaction with substrate tRNA" evidence="1">
    <location>
        <begin position="36"/>
        <end position="39"/>
    </location>
</feature>
<feature type="binding site" evidence="1">
    <location>
        <begin position="11"/>
        <end position="18"/>
    </location>
    <ligand>
        <name>ATP</name>
        <dbReference type="ChEBI" id="CHEBI:30616"/>
    </ligand>
</feature>
<feature type="binding site" evidence="1">
    <location>
        <begin position="13"/>
        <end position="18"/>
    </location>
    <ligand>
        <name>substrate</name>
    </ligand>
</feature>
<feature type="site" description="Interaction with substrate tRNA" evidence="1">
    <location>
        <position position="105"/>
    </location>
</feature>
<comment type="function">
    <text evidence="1">Catalyzes the transfer of a dimethylallyl group onto the adenine at position 37 in tRNAs that read codons beginning with uridine, leading to the formation of N6-(dimethylallyl)adenosine (i(6)A).</text>
</comment>
<comment type="catalytic activity">
    <reaction evidence="1">
        <text>adenosine(37) in tRNA + dimethylallyl diphosphate = N(6)-dimethylallyladenosine(37) in tRNA + diphosphate</text>
        <dbReference type="Rhea" id="RHEA:26482"/>
        <dbReference type="Rhea" id="RHEA-COMP:10162"/>
        <dbReference type="Rhea" id="RHEA-COMP:10375"/>
        <dbReference type="ChEBI" id="CHEBI:33019"/>
        <dbReference type="ChEBI" id="CHEBI:57623"/>
        <dbReference type="ChEBI" id="CHEBI:74411"/>
        <dbReference type="ChEBI" id="CHEBI:74415"/>
        <dbReference type="EC" id="2.5.1.75"/>
    </reaction>
</comment>
<comment type="cofactor">
    <cofactor evidence="1">
        <name>Mg(2+)</name>
        <dbReference type="ChEBI" id="CHEBI:18420"/>
    </cofactor>
</comment>
<comment type="subunit">
    <text evidence="1">Monomer.</text>
</comment>
<comment type="similarity">
    <text evidence="1">Belongs to the IPP transferase family.</text>
</comment>
<keyword id="KW-0067">ATP-binding</keyword>
<keyword id="KW-0460">Magnesium</keyword>
<keyword id="KW-0547">Nucleotide-binding</keyword>
<keyword id="KW-0808">Transferase</keyword>
<keyword id="KW-0819">tRNA processing</keyword>
<name>MIAA2_PHOV8</name>
<dbReference type="EC" id="2.5.1.75" evidence="1"/>
<dbReference type="EMBL" id="CP000139">
    <property type="protein sequence ID" value="ABR41197.1"/>
    <property type="molecule type" value="Genomic_DNA"/>
</dbReference>
<dbReference type="SMR" id="A6L683"/>
<dbReference type="STRING" id="435590.BVU_3584"/>
<dbReference type="PaxDb" id="435590-BVU_3584"/>
<dbReference type="GeneID" id="5304544"/>
<dbReference type="KEGG" id="bvu:BVU_3584"/>
<dbReference type="eggNOG" id="COG0324">
    <property type="taxonomic scope" value="Bacteria"/>
</dbReference>
<dbReference type="HOGENOM" id="CLU_032616_0_1_10"/>
<dbReference type="BioCyc" id="BVUL435590:G1G59-3720-MONOMER"/>
<dbReference type="Proteomes" id="UP000002861">
    <property type="component" value="Chromosome"/>
</dbReference>
<dbReference type="GO" id="GO:0005524">
    <property type="term" value="F:ATP binding"/>
    <property type="evidence" value="ECO:0007669"/>
    <property type="project" value="UniProtKB-UniRule"/>
</dbReference>
<dbReference type="GO" id="GO:0052381">
    <property type="term" value="F:tRNA dimethylallyltransferase activity"/>
    <property type="evidence" value="ECO:0007669"/>
    <property type="project" value="UniProtKB-UniRule"/>
</dbReference>
<dbReference type="GO" id="GO:0006400">
    <property type="term" value="P:tRNA modification"/>
    <property type="evidence" value="ECO:0007669"/>
    <property type="project" value="TreeGrafter"/>
</dbReference>
<dbReference type="Gene3D" id="1.10.287.890">
    <property type="entry name" value="Crystal structure of tRNA isopentenylpyrophosphate transferase (bh2366) domain"/>
    <property type="match status" value="1"/>
</dbReference>
<dbReference type="Gene3D" id="3.40.50.300">
    <property type="entry name" value="P-loop containing nucleotide triphosphate hydrolases"/>
    <property type="match status" value="1"/>
</dbReference>
<dbReference type="HAMAP" id="MF_00185">
    <property type="entry name" value="IPP_trans"/>
    <property type="match status" value="1"/>
</dbReference>
<dbReference type="InterPro" id="IPR039657">
    <property type="entry name" value="Dimethylallyltransferase"/>
</dbReference>
<dbReference type="InterPro" id="IPR018022">
    <property type="entry name" value="IPT"/>
</dbReference>
<dbReference type="InterPro" id="IPR027417">
    <property type="entry name" value="P-loop_NTPase"/>
</dbReference>
<dbReference type="NCBIfam" id="TIGR00174">
    <property type="entry name" value="miaA"/>
    <property type="match status" value="1"/>
</dbReference>
<dbReference type="PANTHER" id="PTHR11088">
    <property type="entry name" value="TRNA DIMETHYLALLYLTRANSFERASE"/>
    <property type="match status" value="1"/>
</dbReference>
<dbReference type="PANTHER" id="PTHR11088:SF60">
    <property type="entry name" value="TRNA DIMETHYLALLYLTRANSFERASE"/>
    <property type="match status" value="1"/>
</dbReference>
<dbReference type="Pfam" id="PF01715">
    <property type="entry name" value="IPPT"/>
    <property type="match status" value="1"/>
</dbReference>
<dbReference type="SUPFAM" id="SSF52540">
    <property type="entry name" value="P-loop containing nucleoside triphosphate hydrolases"/>
    <property type="match status" value="2"/>
</dbReference>
<gene>
    <name evidence="1" type="primary">miaA2</name>
    <name type="ordered locus">BVU_3584</name>
</gene>
<organism>
    <name type="scientific">Phocaeicola vulgatus (strain ATCC 8482 / DSM 1447 / JCM 5826 / CCUG 4940 / NBRC 14291 / NCTC 11154)</name>
    <name type="common">Bacteroides vulgatus</name>
    <dbReference type="NCBI Taxonomy" id="435590"/>
    <lineage>
        <taxon>Bacteria</taxon>
        <taxon>Pseudomonadati</taxon>
        <taxon>Bacteroidota</taxon>
        <taxon>Bacteroidia</taxon>
        <taxon>Bacteroidales</taxon>
        <taxon>Bacteroidaceae</taxon>
        <taxon>Phocaeicola</taxon>
    </lineage>
</organism>
<proteinExistence type="inferred from homology"/>
<accession>A6L683</accession>
<sequence length="307" mass="35774">MEKYDLITILGPTASGKTPLAAALAYKLDTEIISGDSRQVYRRMDLGTGKDLEDYVVNGQQIPYHLIDIVDPGYKYNVFEFQRDFLNAYDQVRWKDKLPILCGGTGMYLESVLKGYRLLPVPENPKLRDSLADKSLAELTRLLSTYRKLHNSTDVDTVKRAIRAIEIEEYYKHQSAEYREFPQIHSLIIGVDIARELRREKISHRLKQRLDEGMVNEVKALLDSGISSEDLIYYGLEYKYLTLYVLGKLSFNEMFHQLEIAIHQFAKRQMTWFRGMERRGFTIHWLDACLPMEDKVEKIINLLHTKN</sequence>
<reference key="1">
    <citation type="journal article" date="2007" name="PLoS Biol.">
        <title>Evolution of symbiotic bacteria in the distal human intestine.</title>
        <authorList>
            <person name="Xu J."/>
            <person name="Mahowald M.A."/>
            <person name="Ley R.E."/>
            <person name="Lozupone C.A."/>
            <person name="Hamady M."/>
            <person name="Martens E.C."/>
            <person name="Henrissat B."/>
            <person name="Coutinho P.M."/>
            <person name="Minx P."/>
            <person name="Latreille P."/>
            <person name="Cordum H."/>
            <person name="Van Brunt A."/>
            <person name="Kim K."/>
            <person name="Fulton R.S."/>
            <person name="Fulton L.A."/>
            <person name="Clifton S.W."/>
            <person name="Wilson R.K."/>
            <person name="Knight R.D."/>
            <person name="Gordon J.I."/>
        </authorList>
    </citation>
    <scope>NUCLEOTIDE SEQUENCE [LARGE SCALE GENOMIC DNA]</scope>
    <source>
        <strain>ATCC 8482 / DSM 1447 / JCM 5826 / CCUG 4940 / NBRC 14291 / NCTC 11154</strain>
    </source>
</reference>
<protein>
    <recommendedName>
        <fullName evidence="1">tRNA dimethylallyltransferase 2</fullName>
        <ecNumber evidence="1">2.5.1.75</ecNumber>
    </recommendedName>
    <alternativeName>
        <fullName evidence="1">Dimethylallyl diphosphate:tRNA dimethylallyltransferase 2</fullName>
        <shortName evidence="1">DMAPP:tRNA dimethylallyltransferase 2</shortName>
        <shortName evidence="1">DMATase 2</shortName>
    </alternativeName>
    <alternativeName>
        <fullName evidence="1">Isopentenyl-diphosphate:tRNA isopentenyltransferase 2</fullName>
        <shortName evidence="1">IPP transferase 2</shortName>
        <shortName evidence="1">IPPT 2</shortName>
        <shortName evidence="1">IPTase 2</shortName>
    </alternativeName>
</protein>